<reference key="1">
    <citation type="journal article" date="1997" name="Nature">
        <title>Genomic sequence of a Lyme disease spirochaete, Borrelia burgdorferi.</title>
        <authorList>
            <person name="Fraser C.M."/>
            <person name="Casjens S."/>
            <person name="Huang W.M."/>
            <person name="Sutton G.G."/>
            <person name="Clayton R.A."/>
            <person name="Lathigra R."/>
            <person name="White O."/>
            <person name="Ketchum K.A."/>
            <person name="Dodson R.J."/>
            <person name="Hickey E.K."/>
            <person name="Gwinn M.L."/>
            <person name="Dougherty B.A."/>
            <person name="Tomb J.-F."/>
            <person name="Fleischmann R.D."/>
            <person name="Richardson D.L."/>
            <person name="Peterson J.D."/>
            <person name="Kerlavage A.R."/>
            <person name="Quackenbush J."/>
            <person name="Salzberg S.L."/>
            <person name="Hanson M."/>
            <person name="van Vugt R."/>
            <person name="Palmer N."/>
            <person name="Adams M.D."/>
            <person name="Gocayne J.D."/>
            <person name="Weidman J.F."/>
            <person name="Utterback T.R."/>
            <person name="Watthey L."/>
            <person name="McDonald L.A."/>
            <person name="Artiach P."/>
            <person name="Bowman C."/>
            <person name="Garland S.A."/>
            <person name="Fujii C."/>
            <person name="Cotton M.D."/>
            <person name="Horst K."/>
            <person name="Roberts K.M."/>
            <person name="Hatch B."/>
            <person name="Smith H.O."/>
            <person name="Venter J.C."/>
        </authorList>
    </citation>
    <scope>NUCLEOTIDE SEQUENCE [LARGE SCALE GENOMIC DNA]</scope>
    <source>
        <strain>ATCC 35210 / DSM 4680 / CIP 102532 / B31</strain>
    </source>
</reference>
<organism>
    <name type="scientific">Borreliella burgdorferi (strain ATCC 35210 / DSM 4680 / CIP 102532 / B31)</name>
    <name type="common">Borrelia burgdorferi</name>
    <dbReference type="NCBI Taxonomy" id="224326"/>
    <lineage>
        <taxon>Bacteria</taxon>
        <taxon>Pseudomonadati</taxon>
        <taxon>Spirochaetota</taxon>
        <taxon>Spirochaetia</taxon>
        <taxon>Spirochaetales</taxon>
        <taxon>Borreliaceae</taxon>
        <taxon>Borreliella</taxon>
    </lineage>
</organism>
<gene>
    <name evidence="1" type="primary">nusA</name>
    <name type="ordered locus">BB_0800</name>
</gene>
<keyword id="KW-0963">Cytoplasm</keyword>
<keyword id="KW-1185">Reference proteome</keyword>
<keyword id="KW-0694">RNA-binding</keyword>
<keyword id="KW-0804">Transcription</keyword>
<keyword id="KW-0889">Transcription antitermination</keyword>
<keyword id="KW-0805">Transcription regulation</keyword>
<keyword id="KW-0806">Transcription termination</keyword>
<evidence type="ECO:0000255" key="1">
    <source>
        <dbReference type="HAMAP-Rule" id="MF_00945"/>
    </source>
</evidence>
<proteinExistence type="inferred from homology"/>
<sequence>MIKGTGHMIVNIANDRGMSIDSIRKTIKESVLIAYKKYFGSNENAFIKFDDDTGDLSVYAKKKIVKEVKDSLLEILEKDISKENIVEGDYAYIEINPKVFDRLSIQVAKQRTKNDLQGIEDNEILSEFKSKLNKVVIGYVQQNRNGDLYVNLGNTDGIIPKKYQSPREVYNLNDKIRVLVYNVKKGKNGIEVILSRTHPKFIEELLALEIPEIEEGIIKIHKIVRDPGYRIKVAVYSEKEEIDPVGPCIGQKGVRIQSIIKELEGEKIDIIPYSKDIKEFIKDSLTPSKIEHVYILDEDLHKALVVVSDDQLSLAIGKMGQNVRLANRLLDWAIDVKTSSQFAEMKANSEFKQETLEMFDKVMQDVVEEEQFEEISKISDLKLLDPSVISNLSKEGFDDINNFLQADEGVLFNLGVSYEKQEEINKILKEGMIIIANDNDESMEKVEEDEELLCPECGVVINENMTSCPGCKIGLSFEFEEE</sequence>
<name>NUSA_BORBU</name>
<comment type="function">
    <text evidence="1">Participates in both transcription termination and antitermination.</text>
</comment>
<comment type="subunit">
    <text evidence="1">Monomer. Binds directly to the core enzyme of the DNA-dependent RNA polymerase and to nascent RNA.</text>
</comment>
<comment type="subcellular location">
    <subcellularLocation>
        <location evidence="1">Cytoplasm</location>
    </subcellularLocation>
</comment>
<comment type="similarity">
    <text evidence="1">Belongs to the NusA family.</text>
</comment>
<protein>
    <recommendedName>
        <fullName evidence="1">Transcription termination/antitermination protein NusA</fullName>
    </recommendedName>
</protein>
<accession>O51740</accession>
<feature type="chain" id="PRO_0000181961" description="Transcription termination/antitermination protein NusA">
    <location>
        <begin position="1"/>
        <end position="482"/>
    </location>
</feature>
<feature type="domain" description="S1 motif" evidence="1">
    <location>
        <begin position="133"/>
        <end position="197"/>
    </location>
</feature>
<feature type="domain" description="KH" evidence="1">
    <location>
        <begin position="300"/>
        <end position="446"/>
    </location>
</feature>
<dbReference type="EMBL" id="AE000783">
    <property type="protein sequence ID" value="AAC67154.1"/>
    <property type="molecule type" value="Genomic_DNA"/>
</dbReference>
<dbReference type="PIR" id="G70199">
    <property type="entry name" value="G70199"/>
</dbReference>
<dbReference type="RefSeq" id="NP_212934.1">
    <property type="nucleotide sequence ID" value="NC_001318.1"/>
</dbReference>
<dbReference type="RefSeq" id="WP_002657224.1">
    <property type="nucleotide sequence ID" value="NC_001318.1"/>
</dbReference>
<dbReference type="SMR" id="O51740"/>
<dbReference type="STRING" id="224326.BB_0800"/>
<dbReference type="PaxDb" id="224326-BB_0800"/>
<dbReference type="EnsemblBacteria" id="AAC67154">
    <property type="protein sequence ID" value="AAC67154"/>
    <property type="gene ID" value="BB_0800"/>
</dbReference>
<dbReference type="GeneID" id="56567379"/>
<dbReference type="KEGG" id="bbu:BB_0800"/>
<dbReference type="PATRIC" id="fig|224326.49.peg.1192"/>
<dbReference type="HOGENOM" id="CLU_029242_2_6_12"/>
<dbReference type="OrthoDB" id="9807233at2"/>
<dbReference type="Proteomes" id="UP000001807">
    <property type="component" value="Chromosome"/>
</dbReference>
<dbReference type="GO" id="GO:0005829">
    <property type="term" value="C:cytosol"/>
    <property type="evidence" value="ECO:0000314"/>
    <property type="project" value="CAFA"/>
</dbReference>
<dbReference type="GO" id="GO:0003700">
    <property type="term" value="F:DNA-binding transcription factor activity"/>
    <property type="evidence" value="ECO:0007669"/>
    <property type="project" value="InterPro"/>
</dbReference>
<dbReference type="GO" id="GO:0003723">
    <property type="term" value="F:RNA binding"/>
    <property type="evidence" value="ECO:0007669"/>
    <property type="project" value="UniProtKB-UniRule"/>
</dbReference>
<dbReference type="GO" id="GO:0006353">
    <property type="term" value="P:DNA-templated transcription termination"/>
    <property type="evidence" value="ECO:0007669"/>
    <property type="project" value="UniProtKB-UniRule"/>
</dbReference>
<dbReference type="GO" id="GO:0031564">
    <property type="term" value="P:transcription antitermination"/>
    <property type="evidence" value="ECO:0007669"/>
    <property type="project" value="UniProtKB-UniRule"/>
</dbReference>
<dbReference type="CDD" id="cd22529">
    <property type="entry name" value="KH-II_NusA_rpt2"/>
    <property type="match status" value="1"/>
</dbReference>
<dbReference type="CDD" id="cd04455">
    <property type="entry name" value="S1_NusA"/>
    <property type="match status" value="1"/>
</dbReference>
<dbReference type="FunFam" id="3.30.300.20:FF:000002">
    <property type="entry name" value="Transcription termination/antitermination protein NusA"/>
    <property type="match status" value="1"/>
</dbReference>
<dbReference type="FunFam" id="3.30.300.20:FF:000005">
    <property type="entry name" value="Transcription termination/antitermination protein NusA"/>
    <property type="match status" value="1"/>
</dbReference>
<dbReference type="Gene3D" id="3.30.300.20">
    <property type="match status" value="2"/>
</dbReference>
<dbReference type="Gene3D" id="2.40.50.140">
    <property type="entry name" value="Nucleic acid-binding proteins"/>
    <property type="match status" value="1"/>
</dbReference>
<dbReference type="Gene3D" id="3.30.1480.10">
    <property type="entry name" value="NusA, N-terminal domain"/>
    <property type="match status" value="1"/>
</dbReference>
<dbReference type="HAMAP" id="MF_00945_B">
    <property type="entry name" value="NusA_B"/>
    <property type="match status" value="1"/>
</dbReference>
<dbReference type="InterPro" id="IPR004087">
    <property type="entry name" value="KH_dom"/>
</dbReference>
<dbReference type="InterPro" id="IPR015946">
    <property type="entry name" value="KH_dom-like_a/b"/>
</dbReference>
<dbReference type="InterPro" id="IPR025249">
    <property type="entry name" value="KH_dom_NusA-like"/>
</dbReference>
<dbReference type="InterPro" id="IPR009019">
    <property type="entry name" value="KH_sf_prok-type"/>
</dbReference>
<dbReference type="InterPro" id="IPR012340">
    <property type="entry name" value="NA-bd_OB-fold"/>
</dbReference>
<dbReference type="InterPro" id="IPR030842">
    <property type="entry name" value="NusA_bac"/>
</dbReference>
<dbReference type="InterPro" id="IPR036555">
    <property type="entry name" value="NusA_N_sf"/>
</dbReference>
<dbReference type="InterPro" id="IPR003029">
    <property type="entry name" value="S1_domain"/>
</dbReference>
<dbReference type="InterPro" id="IPR013735">
    <property type="entry name" value="TF_NusA_N"/>
</dbReference>
<dbReference type="InterPro" id="IPR010213">
    <property type="entry name" value="Tscrpt_termination_fac_NusA"/>
</dbReference>
<dbReference type="NCBIfam" id="TIGR01953">
    <property type="entry name" value="NusA"/>
    <property type="match status" value="1"/>
</dbReference>
<dbReference type="PANTHER" id="PTHR22648">
    <property type="entry name" value="TRANSCRIPTION TERMINATION FACTOR NUSA"/>
    <property type="match status" value="1"/>
</dbReference>
<dbReference type="PANTHER" id="PTHR22648:SF0">
    <property type="entry name" value="TRANSCRIPTION TERMINATION_ANTITERMINATION PROTEIN NUSA"/>
    <property type="match status" value="1"/>
</dbReference>
<dbReference type="Pfam" id="PF13184">
    <property type="entry name" value="KH_5"/>
    <property type="match status" value="1"/>
</dbReference>
<dbReference type="Pfam" id="PF08529">
    <property type="entry name" value="NusA_N"/>
    <property type="match status" value="1"/>
</dbReference>
<dbReference type="Pfam" id="PF00575">
    <property type="entry name" value="S1"/>
    <property type="match status" value="1"/>
</dbReference>
<dbReference type="SMART" id="SM00322">
    <property type="entry name" value="KH"/>
    <property type="match status" value="1"/>
</dbReference>
<dbReference type="SMART" id="SM00316">
    <property type="entry name" value="S1"/>
    <property type="match status" value="1"/>
</dbReference>
<dbReference type="SUPFAM" id="SSF50249">
    <property type="entry name" value="Nucleic acid-binding proteins"/>
    <property type="match status" value="1"/>
</dbReference>
<dbReference type="SUPFAM" id="SSF54814">
    <property type="entry name" value="Prokaryotic type KH domain (KH-domain type II)"/>
    <property type="match status" value="2"/>
</dbReference>
<dbReference type="SUPFAM" id="SSF69705">
    <property type="entry name" value="Transcription factor NusA, N-terminal domain"/>
    <property type="match status" value="1"/>
</dbReference>
<dbReference type="PROSITE" id="PS50126">
    <property type="entry name" value="S1"/>
    <property type="match status" value="1"/>
</dbReference>